<proteinExistence type="inferred from homology"/>
<comment type="subunit">
    <text evidence="1">The basal body constitutes a major portion of the flagellar organelle and consists of four rings (L,P,S, and M) mounted on a central rod. The rod consists of about 26 subunits of FlgG in the distal portion, and FlgB, FlgC and FlgF are thought to build up the proximal portion of the rod with about 6 subunits each (By similarity).</text>
</comment>
<comment type="subcellular location">
    <subcellularLocation>
        <location evidence="1">Bacterial flagellum basal body</location>
    </subcellularLocation>
</comment>
<comment type="similarity">
    <text evidence="2">Belongs to the flagella basal body rod proteins family.</text>
</comment>
<evidence type="ECO:0000250" key="1"/>
<evidence type="ECO:0000305" key="2"/>
<dbReference type="EMBL" id="S52478">
    <property type="protein sequence ID" value="AAB24739.1"/>
    <property type="molecule type" value="Genomic_DNA"/>
</dbReference>
<dbReference type="EMBL" id="AE005673">
    <property type="protein sequence ID" value="AAK24035.1"/>
    <property type="molecule type" value="Genomic_DNA"/>
</dbReference>
<dbReference type="PIR" id="G87504">
    <property type="entry name" value="G87504"/>
</dbReference>
<dbReference type="PIR" id="S27304">
    <property type="entry name" value="S27304"/>
</dbReference>
<dbReference type="RefSeq" id="NP_420867.1">
    <property type="nucleotide sequence ID" value="NC_002696.2"/>
</dbReference>
<dbReference type="RefSeq" id="WP_010919925.1">
    <property type="nucleotide sequence ID" value="NC_002696.2"/>
</dbReference>
<dbReference type="SMR" id="Q06172"/>
<dbReference type="STRING" id="190650.CC_2064"/>
<dbReference type="EnsemblBacteria" id="AAK24035">
    <property type="protein sequence ID" value="AAK24035"/>
    <property type="gene ID" value="CC_2064"/>
</dbReference>
<dbReference type="KEGG" id="ccr:CC_2064"/>
<dbReference type="PATRIC" id="fig|190650.5.peg.2083"/>
<dbReference type="eggNOG" id="COG4786">
    <property type="taxonomic scope" value="Bacteria"/>
</dbReference>
<dbReference type="HOGENOM" id="CLU_013687_0_1_5"/>
<dbReference type="BioCyc" id="CAULO:CC2064-MONOMER"/>
<dbReference type="Proteomes" id="UP000001816">
    <property type="component" value="Chromosome"/>
</dbReference>
<dbReference type="GO" id="GO:0009426">
    <property type="term" value="C:bacterial-type flagellum basal body, distal rod"/>
    <property type="evidence" value="ECO:0007669"/>
    <property type="project" value="InterPro"/>
</dbReference>
<dbReference type="GO" id="GO:0071978">
    <property type="term" value="P:bacterial-type flagellum-dependent swarming motility"/>
    <property type="evidence" value="ECO:0007669"/>
    <property type="project" value="TreeGrafter"/>
</dbReference>
<dbReference type="InterPro" id="IPR001444">
    <property type="entry name" value="Flag_bb_rod_N"/>
</dbReference>
<dbReference type="InterPro" id="IPR019776">
    <property type="entry name" value="Flagellar_basal_body_rod_CS"/>
</dbReference>
<dbReference type="InterPro" id="IPR020013">
    <property type="entry name" value="Flagellar_FlgE/F/G"/>
</dbReference>
<dbReference type="InterPro" id="IPR010930">
    <property type="entry name" value="Flg_bb/hook_C_dom"/>
</dbReference>
<dbReference type="InterPro" id="IPR037925">
    <property type="entry name" value="FlgE/F/G-like"/>
</dbReference>
<dbReference type="InterPro" id="IPR012834">
    <property type="entry name" value="FlgG_G_neg"/>
</dbReference>
<dbReference type="InterPro" id="IPR053967">
    <property type="entry name" value="LlgE_F_G-like_D1"/>
</dbReference>
<dbReference type="NCBIfam" id="TIGR03506">
    <property type="entry name" value="FlgEFG_subfam"/>
    <property type="match status" value="2"/>
</dbReference>
<dbReference type="NCBIfam" id="TIGR02488">
    <property type="entry name" value="flgG_G_neg"/>
    <property type="match status" value="1"/>
</dbReference>
<dbReference type="PANTHER" id="PTHR30435:SF19">
    <property type="entry name" value="FLAGELLAR BASAL-BODY ROD PROTEIN FLGG"/>
    <property type="match status" value="1"/>
</dbReference>
<dbReference type="PANTHER" id="PTHR30435">
    <property type="entry name" value="FLAGELLAR PROTEIN"/>
    <property type="match status" value="1"/>
</dbReference>
<dbReference type="Pfam" id="PF00460">
    <property type="entry name" value="Flg_bb_rod"/>
    <property type="match status" value="1"/>
</dbReference>
<dbReference type="Pfam" id="PF06429">
    <property type="entry name" value="Flg_bbr_C"/>
    <property type="match status" value="1"/>
</dbReference>
<dbReference type="Pfam" id="PF22692">
    <property type="entry name" value="LlgE_F_G_D1"/>
    <property type="match status" value="1"/>
</dbReference>
<dbReference type="SUPFAM" id="SSF117143">
    <property type="entry name" value="Flagellar hook protein flgE"/>
    <property type="match status" value="1"/>
</dbReference>
<dbReference type="PROSITE" id="PS00588">
    <property type="entry name" value="FLAGELLA_BB_ROD"/>
    <property type="match status" value="1"/>
</dbReference>
<reference key="1">
    <citation type="journal article" date="1992" name="J. Mol. Biol.">
        <title>Organization and ordered expression of Caulobacter genes encoding flagellar basal body rod and ring proteins.</title>
        <authorList>
            <person name="Dingwall A."/>
            <person name="Garman J.D."/>
            <person name="Shapiro L."/>
        </authorList>
    </citation>
    <scope>NUCLEOTIDE SEQUENCE [GENOMIC DNA]</scope>
    <source>
        <strain>ATCC 19089 / CIP 103742 / CB 15</strain>
    </source>
</reference>
<reference key="2">
    <citation type="journal article" date="2001" name="Proc. Natl. Acad. Sci. U.S.A.">
        <title>Complete genome sequence of Caulobacter crescentus.</title>
        <authorList>
            <person name="Nierman W.C."/>
            <person name="Feldblyum T.V."/>
            <person name="Laub M.T."/>
            <person name="Paulsen I.T."/>
            <person name="Nelson K.E."/>
            <person name="Eisen J.A."/>
            <person name="Heidelberg J.F."/>
            <person name="Alley M.R.K."/>
            <person name="Ohta N."/>
            <person name="Maddock J.R."/>
            <person name="Potocka I."/>
            <person name="Nelson W.C."/>
            <person name="Newton A."/>
            <person name="Stephens C."/>
            <person name="Phadke N.D."/>
            <person name="Ely B."/>
            <person name="DeBoy R.T."/>
            <person name="Dodson R.J."/>
            <person name="Durkin A.S."/>
            <person name="Gwinn M.L."/>
            <person name="Haft D.H."/>
            <person name="Kolonay J.F."/>
            <person name="Smit J."/>
            <person name="Craven M.B."/>
            <person name="Khouri H.M."/>
            <person name="Shetty J."/>
            <person name="Berry K.J."/>
            <person name="Utterback T.R."/>
            <person name="Tran K."/>
            <person name="Wolf A.M."/>
            <person name="Vamathevan J.J."/>
            <person name="Ermolaeva M.D."/>
            <person name="White O."/>
            <person name="Salzberg S.L."/>
            <person name="Venter J.C."/>
            <person name="Shapiro L."/>
            <person name="Fraser C.M."/>
        </authorList>
    </citation>
    <scope>NUCLEOTIDE SEQUENCE [LARGE SCALE GENOMIC DNA]</scope>
    <source>
        <strain>ATCC 19089 / CIP 103742 / CB 15</strain>
    </source>
</reference>
<name>FLGG_CAUVC</name>
<gene>
    <name type="primary">flgG</name>
    <name type="synonym">flaB</name>
    <name type="ordered locus">CC_2064</name>
</gene>
<sequence length="262" mass="27554">MQALRTAASGMAAQQLNVEVISNNIANMNTVGFKRQRAEFQDLLYQTIERAGSQSSSDGNIVPTGVQVGGGVKAGSVYRITEQGTPTLTDSPLDLAIQGKGYMPILLPSGETAYTRAGNFSTNDQGQIVTEDGYLVQPGITIPQNATDITISKSGLVQVKLDGQPQPQTVGQIQLANFLNEGGLEAIGDNLFLETAASGAATLAAPGEPGFGMLLQHYTEASNVDAVSEITALITAQRAYEMNSKVISTADQMLQATSQLRS</sequence>
<protein>
    <recommendedName>
        <fullName>Flagellar basal-body rod protein FlgG</fullName>
    </recommendedName>
    <alternativeName>
        <fullName>Distal rod protein</fullName>
    </alternativeName>
</protein>
<feature type="chain" id="PRO_0000180848" description="Flagellar basal-body rod protein FlgG">
    <location>
        <begin position="1"/>
        <end position="262"/>
    </location>
</feature>
<feature type="sequence conflict" description="In Ref. 1; AAB24739." evidence="2" ref="1">
    <original>AAPGEPGFGMLLQHY</original>
    <variation>VRRASRALACCCSTD</variation>
    <location>
        <begin position="204"/>
        <end position="218"/>
    </location>
</feature>
<accession>Q06172</accession>
<keyword id="KW-0975">Bacterial flagellum</keyword>
<keyword id="KW-1185">Reference proteome</keyword>
<organism>
    <name type="scientific">Caulobacter vibrioides (strain ATCC 19089 / CIP 103742 / CB 15)</name>
    <name type="common">Caulobacter crescentus</name>
    <dbReference type="NCBI Taxonomy" id="190650"/>
    <lineage>
        <taxon>Bacteria</taxon>
        <taxon>Pseudomonadati</taxon>
        <taxon>Pseudomonadota</taxon>
        <taxon>Alphaproteobacteria</taxon>
        <taxon>Caulobacterales</taxon>
        <taxon>Caulobacteraceae</taxon>
        <taxon>Caulobacter</taxon>
    </lineage>
</organism>